<organism>
    <name type="scientific">Escherichia coli O8 (strain IAI1)</name>
    <dbReference type="NCBI Taxonomy" id="585034"/>
    <lineage>
        <taxon>Bacteria</taxon>
        <taxon>Pseudomonadati</taxon>
        <taxon>Pseudomonadota</taxon>
        <taxon>Gammaproteobacteria</taxon>
        <taxon>Enterobacterales</taxon>
        <taxon>Enterobacteriaceae</taxon>
        <taxon>Escherichia</taxon>
    </lineage>
</organism>
<evidence type="ECO:0000255" key="1">
    <source>
        <dbReference type="HAMAP-Rule" id="MF_00228"/>
    </source>
</evidence>
<reference key="1">
    <citation type="journal article" date="2009" name="PLoS Genet.">
        <title>Organised genome dynamics in the Escherichia coli species results in highly diverse adaptive paths.</title>
        <authorList>
            <person name="Touchon M."/>
            <person name="Hoede C."/>
            <person name="Tenaillon O."/>
            <person name="Barbe V."/>
            <person name="Baeriswyl S."/>
            <person name="Bidet P."/>
            <person name="Bingen E."/>
            <person name="Bonacorsi S."/>
            <person name="Bouchier C."/>
            <person name="Bouvet O."/>
            <person name="Calteau A."/>
            <person name="Chiapello H."/>
            <person name="Clermont O."/>
            <person name="Cruveiller S."/>
            <person name="Danchin A."/>
            <person name="Diard M."/>
            <person name="Dossat C."/>
            <person name="Karoui M.E."/>
            <person name="Frapy E."/>
            <person name="Garry L."/>
            <person name="Ghigo J.M."/>
            <person name="Gilles A.M."/>
            <person name="Johnson J."/>
            <person name="Le Bouguenec C."/>
            <person name="Lescat M."/>
            <person name="Mangenot S."/>
            <person name="Martinez-Jehanne V."/>
            <person name="Matic I."/>
            <person name="Nassif X."/>
            <person name="Oztas S."/>
            <person name="Petit M.A."/>
            <person name="Pichon C."/>
            <person name="Rouy Z."/>
            <person name="Ruf C.S."/>
            <person name="Schneider D."/>
            <person name="Tourret J."/>
            <person name="Vacherie B."/>
            <person name="Vallenet D."/>
            <person name="Medigue C."/>
            <person name="Rocha E.P.C."/>
            <person name="Denamur E."/>
        </authorList>
    </citation>
    <scope>NUCLEOTIDE SEQUENCE [LARGE SCALE GENOMIC DNA]</scope>
    <source>
        <strain>IAI1</strain>
    </source>
</reference>
<sequence length="262" mass="27281">MQVDLLSSAQSAHALHLFHQHSPLVHCMTNDVVQTFTANTLLALGASPAMVIETEEASQFAAIASALLINVGTLTQPRAQAMRAAVEQAKSSQTPWTLDPVAVGALDYRRHFCHELLSFKPAAIRGNASEIMALAGIANGGRGVDTTDAAANAIPAAQTLARETGAIVVVTGEVDYVTDGHRAVGIHGGDPLMTKVVGTGCALSAVVAACCALPGDTLENVASACHWMKQAGERAVARSEGPGSFVPHFLDALWQLTQEVQA</sequence>
<dbReference type="EC" id="2.7.1.50" evidence="1"/>
<dbReference type="EMBL" id="CU928160">
    <property type="protein sequence ID" value="CAQ99024.1"/>
    <property type="molecule type" value="Genomic_DNA"/>
</dbReference>
<dbReference type="RefSeq" id="WP_001195605.1">
    <property type="nucleotide sequence ID" value="NC_011741.1"/>
</dbReference>
<dbReference type="SMR" id="B7M485"/>
<dbReference type="GeneID" id="75205960"/>
<dbReference type="KEGG" id="ecr:ECIAI1_2178"/>
<dbReference type="HOGENOM" id="CLU_019943_0_1_6"/>
<dbReference type="UniPathway" id="UPA00060">
    <property type="reaction ID" value="UER00139"/>
</dbReference>
<dbReference type="GO" id="GO:0005524">
    <property type="term" value="F:ATP binding"/>
    <property type="evidence" value="ECO:0007669"/>
    <property type="project" value="UniProtKB-UniRule"/>
</dbReference>
<dbReference type="GO" id="GO:0004417">
    <property type="term" value="F:hydroxyethylthiazole kinase activity"/>
    <property type="evidence" value="ECO:0007669"/>
    <property type="project" value="UniProtKB-UniRule"/>
</dbReference>
<dbReference type="GO" id="GO:0000287">
    <property type="term" value="F:magnesium ion binding"/>
    <property type="evidence" value="ECO:0007669"/>
    <property type="project" value="UniProtKB-UniRule"/>
</dbReference>
<dbReference type="GO" id="GO:0009228">
    <property type="term" value="P:thiamine biosynthetic process"/>
    <property type="evidence" value="ECO:0007669"/>
    <property type="project" value="UniProtKB-KW"/>
</dbReference>
<dbReference type="GO" id="GO:0009229">
    <property type="term" value="P:thiamine diphosphate biosynthetic process"/>
    <property type="evidence" value="ECO:0007669"/>
    <property type="project" value="UniProtKB-UniRule"/>
</dbReference>
<dbReference type="CDD" id="cd01170">
    <property type="entry name" value="THZ_kinase"/>
    <property type="match status" value="1"/>
</dbReference>
<dbReference type="FunFam" id="3.40.1190.20:FF:000015">
    <property type="entry name" value="Hydroxyethylthiazole kinase"/>
    <property type="match status" value="1"/>
</dbReference>
<dbReference type="Gene3D" id="3.40.1190.20">
    <property type="match status" value="1"/>
</dbReference>
<dbReference type="HAMAP" id="MF_00228">
    <property type="entry name" value="Thz_kinase"/>
    <property type="match status" value="1"/>
</dbReference>
<dbReference type="InterPro" id="IPR000417">
    <property type="entry name" value="Hyethyz_kinase"/>
</dbReference>
<dbReference type="InterPro" id="IPR029056">
    <property type="entry name" value="Ribokinase-like"/>
</dbReference>
<dbReference type="NCBIfam" id="NF006830">
    <property type="entry name" value="PRK09355.1"/>
    <property type="match status" value="1"/>
</dbReference>
<dbReference type="NCBIfam" id="TIGR00694">
    <property type="entry name" value="thiM"/>
    <property type="match status" value="1"/>
</dbReference>
<dbReference type="Pfam" id="PF02110">
    <property type="entry name" value="HK"/>
    <property type="match status" value="1"/>
</dbReference>
<dbReference type="PIRSF" id="PIRSF000513">
    <property type="entry name" value="Thz_kinase"/>
    <property type="match status" value="1"/>
</dbReference>
<dbReference type="PRINTS" id="PR01099">
    <property type="entry name" value="HYETHTZKNASE"/>
</dbReference>
<dbReference type="SUPFAM" id="SSF53613">
    <property type="entry name" value="Ribokinase-like"/>
    <property type="match status" value="1"/>
</dbReference>
<protein>
    <recommendedName>
        <fullName evidence="1">Hydroxyethylthiazole kinase</fullName>
        <ecNumber evidence="1">2.7.1.50</ecNumber>
    </recommendedName>
    <alternativeName>
        <fullName evidence="1">4-methyl-5-beta-hydroxyethylthiazole kinase</fullName>
        <shortName evidence="1">TH kinase</shortName>
        <shortName evidence="1">Thz kinase</shortName>
    </alternativeName>
</protein>
<comment type="function">
    <text evidence="1">Catalyzes the phosphorylation of the hydroxyl group of 4-methyl-5-beta-hydroxyethylthiazole (THZ).</text>
</comment>
<comment type="catalytic activity">
    <reaction evidence="1">
        <text>5-(2-hydroxyethyl)-4-methylthiazole + ATP = 4-methyl-5-(2-phosphooxyethyl)-thiazole + ADP + H(+)</text>
        <dbReference type="Rhea" id="RHEA:24212"/>
        <dbReference type="ChEBI" id="CHEBI:15378"/>
        <dbReference type="ChEBI" id="CHEBI:17957"/>
        <dbReference type="ChEBI" id="CHEBI:30616"/>
        <dbReference type="ChEBI" id="CHEBI:58296"/>
        <dbReference type="ChEBI" id="CHEBI:456216"/>
        <dbReference type="EC" id="2.7.1.50"/>
    </reaction>
</comment>
<comment type="cofactor">
    <cofactor evidence="1">
        <name>Mg(2+)</name>
        <dbReference type="ChEBI" id="CHEBI:18420"/>
    </cofactor>
</comment>
<comment type="pathway">
    <text evidence="1">Cofactor biosynthesis; thiamine diphosphate biosynthesis; 4-methyl-5-(2-phosphoethyl)-thiazole from 5-(2-hydroxyethyl)-4-methylthiazole: step 1/1.</text>
</comment>
<comment type="similarity">
    <text evidence="1">Belongs to the Thz kinase family.</text>
</comment>
<gene>
    <name evidence="1" type="primary">thiM</name>
    <name type="ordered locus">ECIAI1_2178</name>
</gene>
<keyword id="KW-0067">ATP-binding</keyword>
<keyword id="KW-0418">Kinase</keyword>
<keyword id="KW-0460">Magnesium</keyword>
<keyword id="KW-0479">Metal-binding</keyword>
<keyword id="KW-0547">Nucleotide-binding</keyword>
<keyword id="KW-0784">Thiamine biosynthesis</keyword>
<keyword id="KW-0808">Transferase</keyword>
<proteinExistence type="inferred from homology"/>
<feature type="chain" id="PRO_1000198124" description="Hydroxyethylthiazole kinase">
    <location>
        <begin position="1"/>
        <end position="262"/>
    </location>
</feature>
<feature type="binding site" evidence="1">
    <location>
        <position position="50"/>
    </location>
    <ligand>
        <name>substrate</name>
    </ligand>
</feature>
<feature type="binding site" evidence="1">
    <location>
        <position position="125"/>
    </location>
    <ligand>
        <name>ATP</name>
        <dbReference type="ChEBI" id="CHEBI:30616"/>
    </ligand>
</feature>
<feature type="binding site" evidence="1">
    <location>
        <position position="171"/>
    </location>
    <ligand>
        <name>ATP</name>
        <dbReference type="ChEBI" id="CHEBI:30616"/>
    </ligand>
</feature>
<feature type="binding site" evidence="1">
    <location>
        <position position="198"/>
    </location>
    <ligand>
        <name>substrate</name>
    </ligand>
</feature>
<name>THIM_ECO8A</name>
<accession>B7M485</accession>